<dbReference type="EMBL" id="AK137678">
    <property type="protein sequence ID" value="BAE23457.1"/>
    <property type="molecule type" value="mRNA"/>
</dbReference>
<dbReference type="EMBL" id="AK149729">
    <property type="protein sequence ID" value="BAE29051.1"/>
    <property type="status" value="ALT_FRAME"/>
    <property type="molecule type" value="mRNA"/>
</dbReference>
<dbReference type="EMBL" id="BC150856">
    <property type="protein sequence ID" value="AAI50857.1"/>
    <property type="molecule type" value="mRNA"/>
</dbReference>
<dbReference type="EMBL" id="BC150864">
    <property type="protein sequence ID" value="AAI50865.1"/>
    <property type="molecule type" value="mRNA"/>
</dbReference>
<dbReference type="CCDS" id="CCDS52373.1"/>
<dbReference type="RefSeq" id="NP_001028552.1">
    <property type="nucleotide sequence ID" value="NM_001033380.3"/>
</dbReference>
<dbReference type="FunCoup" id="Q3UV16">
    <property type="interactions" value="10"/>
</dbReference>
<dbReference type="STRING" id="10090.ENSMUSP00000136409"/>
<dbReference type="GlyGen" id="Q3UV16">
    <property type="glycosylation" value="1 site"/>
</dbReference>
<dbReference type="PhosphoSitePlus" id="Q3UV16"/>
<dbReference type="PaxDb" id="10090-ENSMUSP00000136409"/>
<dbReference type="ProteomicsDB" id="269077"/>
<dbReference type="Pumba" id="Q3UV16"/>
<dbReference type="Antibodypedia" id="62727">
    <property type="antibodies" value="22 antibodies from 10 providers"/>
</dbReference>
<dbReference type="Ensembl" id="ENSMUST00000178344.3">
    <property type="protein sequence ID" value="ENSMUSP00000136409.2"/>
    <property type="gene ID" value="ENSMUSG00000095115.3"/>
</dbReference>
<dbReference type="GeneID" id="319622"/>
<dbReference type="KEGG" id="mmu:319622"/>
<dbReference type="UCSC" id="uc009jjx.1">
    <property type="organism name" value="mouse"/>
</dbReference>
<dbReference type="AGR" id="MGI:2442416"/>
<dbReference type="CTD" id="162073"/>
<dbReference type="MGI" id="MGI:2442416">
    <property type="gene designation" value="Itpripl2"/>
</dbReference>
<dbReference type="VEuPathDB" id="HostDB:ENSMUSG00000095115"/>
<dbReference type="eggNOG" id="ENOG502QT2J">
    <property type="taxonomic scope" value="Eukaryota"/>
</dbReference>
<dbReference type="GeneTree" id="ENSGT01050000244827"/>
<dbReference type="HOGENOM" id="CLU_043756_0_0_1"/>
<dbReference type="InParanoid" id="Q3UV16"/>
<dbReference type="OMA" id="RVYGGPR"/>
<dbReference type="OrthoDB" id="8745755at2759"/>
<dbReference type="PhylomeDB" id="Q3UV16"/>
<dbReference type="TreeFam" id="TF332277"/>
<dbReference type="BioGRID-ORCS" id="319622">
    <property type="hits" value="1 hit in 78 CRISPR screens"/>
</dbReference>
<dbReference type="ChiTaRS" id="Itpripl2">
    <property type="organism name" value="mouse"/>
</dbReference>
<dbReference type="PRO" id="PR:Q3UV16"/>
<dbReference type="Proteomes" id="UP000000589">
    <property type="component" value="Chromosome 7"/>
</dbReference>
<dbReference type="RNAct" id="Q3UV16">
    <property type="molecule type" value="protein"/>
</dbReference>
<dbReference type="Bgee" id="ENSMUSG00000095115">
    <property type="expression patterns" value="Expressed in molar tooth and 178 other cell types or tissues"/>
</dbReference>
<dbReference type="GO" id="GO:0016020">
    <property type="term" value="C:membrane"/>
    <property type="evidence" value="ECO:0007669"/>
    <property type="project" value="UniProtKB-SubCell"/>
</dbReference>
<dbReference type="Gene3D" id="1.10.1410.40">
    <property type="match status" value="1"/>
</dbReference>
<dbReference type="Gene3D" id="3.30.460.90">
    <property type="match status" value="1"/>
</dbReference>
<dbReference type="InterPro" id="IPR026250">
    <property type="entry name" value="ITPRIP-like"/>
</dbReference>
<dbReference type="InterPro" id="IPR046906">
    <property type="entry name" value="Mab-21_HhH/H2TH-like"/>
</dbReference>
<dbReference type="InterPro" id="IPR024810">
    <property type="entry name" value="MAB21L/cGLR"/>
</dbReference>
<dbReference type="PANTHER" id="PTHR10656">
    <property type="entry name" value="CELL FATE DETERMINING PROTEIN MAB21-RELATED"/>
    <property type="match status" value="1"/>
</dbReference>
<dbReference type="PANTHER" id="PTHR10656:SF9">
    <property type="entry name" value="INOSITOL 1,4,5-TRISPHOSPHATE RECEPTOR-INTERACTING PROTEIN-LIKE 2"/>
    <property type="match status" value="1"/>
</dbReference>
<dbReference type="Pfam" id="PF20266">
    <property type="entry name" value="Mab-21_C"/>
    <property type="match status" value="1"/>
</dbReference>
<dbReference type="PRINTS" id="PR02107">
    <property type="entry name" value="INOS145TPRIP"/>
</dbReference>
<dbReference type="SMART" id="SM01265">
    <property type="entry name" value="Mab-21"/>
    <property type="match status" value="1"/>
</dbReference>
<comment type="subcellular location">
    <subcellularLocation>
        <location>Membrane</location>
        <topology>Single-pass type I membrane protein</topology>
    </subcellularLocation>
</comment>
<comment type="similarity">
    <text evidence="3">Belongs to the ITPRIP family.</text>
</comment>
<comment type="sequence caution" evidence="3">
    <conflict type="frameshift">
        <sequence resource="EMBL-CDS" id="BAE29051"/>
    </conflict>
</comment>
<gene>
    <name type="primary">Itpripl2</name>
</gene>
<organism>
    <name type="scientific">Mus musculus</name>
    <name type="common">Mouse</name>
    <dbReference type="NCBI Taxonomy" id="10090"/>
    <lineage>
        <taxon>Eukaryota</taxon>
        <taxon>Metazoa</taxon>
        <taxon>Chordata</taxon>
        <taxon>Craniata</taxon>
        <taxon>Vertebrata</taxon>
        <taxon>Euteleostomi</taxon>
        <taxon>Mammalia</taxon>
        <taxon>Eutheria</taxon>
        <taxon>Euarchontoglires</taxon>
        <taxon>Glires</taxon>
        <taxon>Rodentia</taxon>
        <taxon>Myomorpha</taxon>
        <taxon>Muroidea</taxon>
        <taxon>Muridae</taxon>
        <taxon>Murinae</taxon>
        <taxon>Mus</taxon>
        <taxon>Mus</taxon>
    </lineage>
</organism>
<name>IPIL2_MOUSE</name>
<proteinExistence type="evidence at transcript level"/>
<keyword id="KW-0472">Membrane</keyword>
<keyword id="KW-0597">Phosphoprotein</keyword>
<keyword id="KW-1185">Reference proteome</keyword>
<keyword id="KW-0732">Signal</keyword>
<keyword id="KW-0812">Transmembrane</keyword>
<keyword id="KW-1133">Transmembrane helix</keyword>
<sequence>MSVRYTLNLRVFWPLVTGLCTALVCLYHALRSSEDARAESPDGADSGFPLLKVAILLLLGYILLRCRHAIRQRLLPGSSRPRGHANFSARSLQEPGLSILLESYYEHEVRLSPHVLGHSKAHVSRIVGELVQAGRARGSPGLITGGALALAFRGDFIQVGSAYEQHKIRRPDSFDVLVPLRLPPQVALEPRSLGTEPSLTPAFRSCFVCALKAPPSPSGASTGQWHRDCKPFAEGFCVDVQGRRHLSATLVLRWFQAHLQRSLATVRYSLEGRCRVSLTPGSLEQPPTLHILPCRTDYGCCRLSMAVRLIPAVHLGDGVFLVAPPPPPSPSGALSELPGGLRAEALWGVNTARQEQKLLGWLQERAPPGACYLKCLQLLKALRDLGARGLDPMAATHWGRILSSYVLKTAVLEVLLNEGSPTPSWDEAHLSECLEKLVKFLRDCLLRRRDLFHCVLGPTGAAAEVGPLPKVLREAAPVDLLAPFDPHSRELAAARLLSTWRRLPQLLRVYGGPRYLARCPAPRSQRIQGSPEDEP</sequence>
<evidence type="ECO:0000250" key="1">
    <source>
        <dbReference type="UniProtKB" id="Q3MIP1"/>
    </source>
</evidence>
<evidence type="ECO:0000255" key="2"/>
<evidence type="ECO:0000305" key="3"/>
<reference key="1">
    <citation type="journal article" date="2005" name="Science">
        <title>The transcriptional landscape of the mammalian genome.</title>
        <authorList>
            <person name="Carninci P."/>
            <person name="Kasukawa T."/>
            <person name="Katayama S."/>
            <person name="Gough J."/>
            <person name="Frith M.C."/>
            <person name="Maeda N."/>
            <person name="Oyama R."/>
            <person name="Ravasi T."/>
            <person name="Lenhard B."/>
            <person name="Wells C."/>
            <person name="Kodzius R."/>
            <person name="Shimokawa K."/>
            <person name="Bajic V.B."/>
            <person name="Brenner S.E."/>
            <person name="Batalov S."/>
            <person name="Forrest A.R."/>
            <person name="Zavolan M."/>
            <person name="Davis M.J."/>
            <person name="Wilming L.G."/>
            <person name="Aidinis V."/>
            <person name="Allen J.E."/>
            <person name="Ambesi-Impiombato A."/>
            <person name="Apweiler R."/>
            <person name="Aturaliya R.N."/>
            <person name="Bailey T.L."/>
            <person name="Bansal M."/>
            <person name="Baxter L."/>
            <person name="Beisel K.W."/>
            <person name="Bersano T."/>
            <person name="Bono H."/>
            <person name="Chalk A.M."/>
            <person name="Chiu K.P."/>
            <person name="Choudhary V."/>
            <person name="Christoffels A."/>
            <person name="Clutterbuck D.R."/>
            <person name="Crowe M.L."/>
            <person name="Dalla E."/>
            <person name="Dalrymple B.P."/>
            <person name="de Bono B."/>
            <person name="Della Gatta G."/>
            <person name="di Bernardo D."/>
            <person name="Down T."/>
            <person name="Engstrom P."/>
            <person name="Fagiolini M."/>
            <person name="Faulkner G."/>
            <person name="Fletcher C.F."/>
            <person name="Fukushima T."/>
            <person name="Furuno M."/>
            <person name="Futaki S."/>
            <person name="Gariboldi M."/>
            <person name="Georgii-Hemming P."/>
            <person name="Gingeras T.R."/>
            <person name="Gojobori T."/>
            <person name="Green R.E."/>
            <person name="Gustincich S."/>
            <person name="Harbers M."/>
            <person name="Hayashi Y."/>
            <person name="Hensch T.K."/>
            <person name="Hirokawa N."/>
            <person name="Hill D."/>
            <person name="Huminiecki L."/>
            <person name="Iacono M."/>
            <person name="Ikeo K."/>
            <person name="Iwama A."/>
            <person name="Ishikawa T."/>
            <person name="Jakt M."/>
            <person name="Kanapin A."/>
            <person name="Katoh M."/>
            <person name="Kawasawa Y."/>
            <person name="Kelso J."/>
            <person name="Kitamura H."/>
            <person name="Kitano H."/>
            <person name="Kollias G."/>
            <person name="Krishnan S.P."/>
            <person name="Kruger A."/>
            <person name="Kummerfeld S.K."/>
            <person name="Kurochkin I.V."/>
            <person name="Lareau L.F."/>
            <person name="Lazarevic D."/>
            <person name="Lipovich L."/>
            <person name="Liu J."/>
            <person name="Liuni S."/>
            <person name="McWilliam S."/>
            <person name="Madan Babu M."/>
            <person name="Madera M."/>
            <person name="Marchionni L."/>
            <person name="Matsuda H."/>
            <person name="Matsuzawa S."/>
            <person name="Miki H."/>
            <person name="Mignone F."/>
            <person name="Miyake S."/>
            <person name="Morris K."/>
            <person name="Mottagui-Tabar S."/>
            <person name="Mulder N."/>
            <person name="Nakano N."/>
            <person name="Nakauchi H."/>
            <person name="Ng P."/>
            <person name="Nilsson R."/>
            <person name="Nishiguchi S."/>
            <person name="Nishikawa S."/>
            <person name="Nori F."/>
            <person name="Ohara O."/>
            <person name="Okazaki Y."/>
            <person name="Orlando V."/>
            <person name="Pang K.C."/>
            <person name="Pavan W.J."/>
            <person name="Pavesi G."/>
            <person name="Pesole G."/>
            <person name="Petrovsky N."/>
            <person name="Piazza S."/>
            <person name="Reed J."/>
            <person name="Reid J.F."/>
            <person name="Ring B.Z."/>
            <person name="Ringwald M."/>
            <person name="Rost B."/>
            <person name="Ruan Y."/>
            <person name="Salzberg S.L."/>
            <person name="Sandelin A."/>
            <person name="Schneider C."/>
            <person name="Schoenbach C."/>
            <person name="Sekiguchi K."/>
            <person name="Semple C.A."/>
            <person name="Seno S."/>
            <person name="Sessa L."/>
            <person name="Sheng Y."/>
            <person name="Shibata Y."/>
            <person name="Shimada H."/>
            <person name="Shimada K."/>
            <person name="Silva D."/>
            <person name="Sinclair B."/>
            <person name="Sperling S."/>
            <person name="Stupka E."/>
            <person name="Sugiura K."/>
            <person name="Sultana R."/>
            <person name="Takenaka Y."/>
            <person name="Taki K."/>
            <person name="Tammoja K."/>
            <person name="Tan S.L."/>
            <person name="Tang S."/>
            <person name="Taylor M.S."/>
            <person name="Tegner J."/>
            <person name="Teichmann S.A."/>
            <person name="Ueda H.R."/>
            <person name="van Nimwegen E."/>
            <person name="Verardo R."/>
            <person name="Wei C.L."/>
            <person name="Yagi K."/>
            <person name="Yamanishi H."/>
            <person name="Zabarovsky E."/>
            <person name="Zhu S."/>
            <person name="Zimmer A."/>
            <person name="Hide W."/>
            <person name="Bult C."/>
            <person name="Grimmond S.M."/>
            <person name="Teasdale R.D."/>
            <person name="Liu E.T."/>
            <person name="Brusic V."/>
            <person name="Quackenbush J."/>
            <person name="Wahlestedt C."/>
            <person name="Mattick J.S."/>
            <person name="Hume D.A."/>
            <person name="Kai C."/>
            <person name="Sasaki D."/>
            <person name="Tomaru Y."/>
            <person name="Fukuda S."/>
            <person name="Kanamori-Katayama M."/>
            <person name="Suzuki M."/>
            <person name="Aoki J."/>
            <person name="Arakawa T."/>
            <person name="Iida J."/>
            <person name="Imamura K."/>
            <person name="Itoh M."/>
            <person name="Kato T."/>
            <person name="Kawaji H."/>
            <person name="Kawagashira N."/>
            <person name="Kawashima T."/>
            <person name="Kojima M."/>
            <person name="Kondo S."/>
            <person name="Konno H."/>
            <person name="Nakano K."/>
            <person name="Ninomiya N."/>
            <person name="Nishio T."/>
            <person name="Okada M."/>
            <person name="Plessy C."/>
            <person name="Shibata K."/>
            <person name="Shiraki T."/>
            <person name="Suzuki S."/>
            <person name="Tagami M."/>
            <person name="Waki K."/>
            <person name="Watahiki A."/>
            <person name="Okamura-Oho Y."/>
            <person name="Suzuki H."/>
            <person name="Kawai J."/>
            <person name="Hayashizaki Y."/>
        </authorList>
    </citation>
    <scope>NUCLEOTIDE SEQUENCE [LARGE SCALE MRNA]</scope>
    <source>
        <strain>C57BL/6J</strain>
        <tissue>Bone marrow</tissue>
        <tissue>Vagina</tissue>
    </source>
</reference>
<reference key="2">
    <citation type="journal article" date="2004" name="Genome Res.">
        <title>The status, quality, and expansion of the NIH full-length cDNA project: the Mammalian Gene Collection (MGC).</title>
        <authorList>
            <consortium name="The MGC Project Team"/>
        </authorList>
    </citation>
    <scope>NUCLEOTIDE SEQUENCE [LARGE SCALE MRNA]</scope>
    <source>
        <tissue>Brain</tissue>
    </source>
</reference>
<protein>
    <recommendedName>
        <fullName>Inositol 1,4,5-trisphosphate receptor-interacting protein-like 2</fullName>
    </recommendedName>
</protein>
<accession>Q3UV16</accession>
<accession>B2RX24</accession>
<accession>Q3UE60</accession>
<feature type="signal peptide" evidence="2">
    <location>
        <begin position="1"/>
        <end position="32"/>
    </location>
</feature>
<feature type="chain" id="PRO_0000336094" description="Inositol 1,4,5-trisphosphate receptor-interacting protein-like 2">
    <location>
        <begin position="33"/>
        <end position="535"/>
    </location>
</feature>
<feature type="topological domain" description="Extracellular" evidence="2">
    <location>
        <begin position="33"/>
        <end position="43"/>
    </location>
</feature>
<feature type="transmembrane region" description="Helical" evidence="2">
    <location>
        <begin position="44"/>
        <end position="64"/>
    </location>
</feature>
<feature type="topological domain" description="Cytoplasmic" evidence="2">
    <location>
        <begin position="65"/>
        <end position="535"/>
    </location>
</feature>
<feature type="modified residue" description="Phosphoserine" evidence="1">
    <location>
        <position position="139"/>
    </location>
</feature>
<feature type="sequence conflict" description="In Ref. 1; BAE29051." evidence="3" ref="1">
    <original>T</original>
    <variation>H</variation>
    <location>
        <position position="200"/>
    </location>
</feature>
<feature type="sequence conflict" description="In Ref. 1; BAE29051." evidence="3" ref="1">
    <original>QRI</original>
    <variation>RRM</variation>
    <location>
        <begin position="525"/>
        <end position="527"/>
    </location>
</feature>